<gene>
    <name evidence="1" type="primary">lgt</name>
    <name type="ordered locus">GDI0929</name>
    <name type="ordered locus">Gdia_1093</name>
</gene>
<sequence>MLPVLIFPQFDPVMVHVGPLVIRWYAMAYITALLVGWRLVRHLVRLAPRAATDVQVDDFLTWATLGVVLGGRLGYILFYQPAVYLAHPLAALQVWHGGMSFHGGALGVIVALALFTWRNGLSFLGFSDRVTVVVPMGLGLGRIANFINGELWGRPAPASLPWAMVFPQAGPEPRHPSELYEALLEGLVLFSVMWIVARRPAIRERPGFLAGLFLFGYAVARSICECFREPDAFIGFLPFGTTMGQILCIPMAIAGVGLMAQAMMRPARPVLMPALPADSP</sequence>
<reference key="1">
    <citation type="journal article" date="2009" name="BMC Genomics">
        <title>Complete genome sequence of the sugarcane nitrogen-fixing endophyte Gluconacetobacter diazotrophicus Pal5.</title>
        <authorList>
            <person name="Bertalan M."/>
            <person name="Albano R."/>
            <person name="de Padua V."/>
            <person name="Rouws L."/>
            <person name="Rojas C."/>
            <person name="Hemerly A."/>
            <person name="Teixeira K."/>
            <person name="Schwab S."/>
            <person name="Araujo J."/>
            <person name="Oliveira A."/>
            <person name="Franca L."/>
            <person name="Magalhaes V."/>
            <person name="Alqueres S."/>
            <person name="Cardoso A."/>
            <person name="Almeida W."/>
            <person name="Loureiro M.M."/>
            <person name="Nogueira E."/>
            <person name="Cidade D."/>
            <person name="Oliveira D."/>
            <person name="Simao T."/>
            <person name="Macedo J."/>
            <person name="Valadao A."/>
            <person name="Dreschsel M."/>
            <person name="Freitas F."/>
            <person name="Vidal M."/>
            <person name="Guedes H."/>
            <person name="Rodrigues E."/>
            <person name="Meneses C."/>
            <person name="Brioso P."/>
            <person name="Pozzer L."/>
            <person name="Figueiredo D."/>
            <person name="Montano H."/>
            <person name="Junior J."/>
            <person name="de Souza Filho G."/>
            <person name="Martin Quintana Flores V."/>
            <person name="Ferreira B."/>
            <person name="Branco A."/>
            <person name="Gonzalez P."/>
            <person name="Guillobel H."/>
            <person name="Lemos M."/>
            <person name="Seibel L."/>
            <person name="Macedo J."/>
            <person name="Alves-Ferreira M."/>
            <person name="Sachetto-Martins G."/>
            <person name="Coelho A."/>
            <person name="Santos E."/>
            <person name="Amaral G."/>
            <person name="Neves A."/>
            <person name="Pacheco A.B."/>
            <person name="Carvalho D."/>
            <person name="Lery L."/>
            <person name="Bisch P."/>
            <person name="Rossle S.C."/>
            <person name="Urmenyi T."/>
            <person name="Rael Pereira A."/>
            <person name="Silva R."/>
            <person name="Rondinelli E."/>
            <person name="von Kruger W."/>
            <person name="Martins O."/>
            <person name="Baldani J.I."/>
            <person name="Ferreira P.C."/>
        </authorList>
    </citation>
    <scope>NUCLEOTIDE SEQUENCE [LARGE SCALE GENOMIC DNA]</scope>
    <source>
        <strain>ATCC 49037 / DSM 5601 / CCUG 37298 / CIP 103539 / LMG 7603 / PAl5</strain>
    </source>
</reference>
<reference key="2">
    <citation type="journal article" date="2010" name="Stand. Genomic Sci.">
        <title>Two genome sequences of the same bacterial strain, Gluconacetobacter diazotrophicus PAl 5, suggest a new standard in genome sequence submission.</title>
        <authorList>
            <person name="Giongo A."/>
            <person name="Tyler H.L."/>
            <person name="Zipperer U.N."/>
            <person name="Triplett E.W."/>
        </authorList>
    </citation>
    <scope>NUCLEOTIDE SEQUENCE [LARGE SCALE GENOMIC DNA]</scope>
    <source>
        <strain>ATCC 49037 / DSM 5601 / CCUG 37298 / CIP 103539 / LMG 7603 / PAl5</strain>
    </source>
</reference>
<organism>
    <name type="scientific">Gluconacetobacter diazotrophicus (strain ATCC 49037 / DSM 5601 / CCUG 37298 / CIP 103539 / LMG 7603 / PAl5)</name>
    <dbReference type="NCBI Taxonomy" id="272568"/>
    <lineage>
        <taxon>Bacteria</taxon>
        <taxon>Pseudomonadati</taxon>
        <taxon>Pseudomonadota</taxon>
        <taxon>Alphaproteobacteria</taxon>
        <taxon>Acetobacterales</taxon>
        <taxon>Acetobacteraceae</taxon>
        <taxon>Gluconacetobacter</taxon>
    </lineage>
</organism>
<evidence type="ECO:0000255" key="1">
    <source>
        <dbReference type="HAMAP-Rule" id="MF_01147"/>
    </source>
</evidence>
<evidence type="ECO:0000305" key="2"/>
<name>LGT_GLUDA</name>
<feature type="chain" id="PRO_1000085076" description="Phosphatidylglycerol--prolipoprotein diacylglyceryl transferase">
    <location>
        <begin position="1"/>
        <end position="280"/>
    </location>
</feature>
<feature type="transmembrane region" description="Helical" evidence="1">
    <location>
        <begin position="59"/>
        <end position="79"/>
    </location>
</feature>
<feature type="transmembrane region" description="Helical" evidence="1">
    <location>
        <begin position="97"/>
        <end position="117"/>
    </location>
</feature>
<feature type="transmembrane region" description="Helical" evidence="1">
    <location>
        <begin position="207"/>
        <end position="227"/>
    </location>
</feature>
<feature type="transmembrane region" description="Helical" evidence="1">
    <location>
        <begin position="233"/>
        <end position="253"/>
    </location>
</feature>
<feature type="binding site" evidence="1">
    <location>
        <position position="142"/>
    </location>
    <ligand>
        <name>a 1,2-diacyl-sn-glycero-3-phospho-(1'-sn-glycerol)</name>
        <dbReference type="ChEBI" id="CHEBI:64716"/>
    </ligand>
</feature>
<feature type="sequence conflict" description="In Ref. 2; ACI50876." evidence="2" ref="2">
    <original>V</original>
    <variation>A</variation>
    <location>
        <position position="256"/>
    </location>
</feature>
<keyword id="KW-0997">Cell inner membrane</keyword>
<keyword id="KW-1003">Cell membrane</keyword>
<keyword id="KW-0472">Membrane</keyword>
<keyword id="KW-1185">Reference proteome</keyword>
<keyword id="KW-0808">Transferase</keyword>
<keyword id="KW-0812">Transmembrane</keyword>
<keyword id="KW-1133">Transmembrane helix</keyword>
<comment type="function">
    <text evidence="1">Catalyzes the transfer of the diacylglyceryl group from phosphatidylglycerol to the sulfhydryl group of the N-terminal cysteine of a prolipoprotein, the first step in the formation of mature lipoproteins.</text>
</comment>
<comment type="catalytic activity">
    <reaction evidence="1">
        <text>L-cysteinyl-[prolipoprotein] + a 1,2-diacyl-sn-glycero-3-phospho-(1'-sn-glycerol) = an S-1,2-diacyl-sn-glyceryl-L-cysteinyl-[prolipoprotein] + sn-glycerol 1-phosphate + H(+)</text>
        <dbReference type="Rhea" id="RHEA:56712"/>
        <dbReference type="Rhea" id="RHEA-COMP:14679"/>
        <dbReference type="Rhea" id="RHEA-COMP:14680"/>
        <dbReference type="ChEBI" id="CHEBI:15378"/>
        <dbReference type="ChEBI" id="CHEBI:29950"/>
        <dbReference type="ChEBI" id="CHEBI:57685"/>
        <dbReference type="ChEBI" id="CHEBI:64716"/>
        <dbReference type="ChEBI" id="CHEBI:140658"/>
        <dbReference type="EC" id="2.5.1.145"/>
    </reaction>
</comment>
<comment type="pathway">
    <text evidence="1">Protein modification; lipoprotein biosynthesis (diacylglyceryl transfer).</text>
</comment>
<comment type="subcellular location">
    <subcellularLocation>
        <location evidence="1">Cell inner membrane</location>
        <topology evidence="1">Multi-pass membrane protein</topology>
    </subcellularLocation>
</comment>
<comment type="similarity">
    <text evidence="1">Belongs to the Lgt family.</text>
</comment>
<dbReference type="EC" id="2.5.1.145" evidence="1"/>
<dbReference type="EMBL" id="AM889285">
    <property type="protein sequence ID" value="CAP54872.1"/>
    <property type="molecule type" value="Genomic_DNA"/>
</dbReference>
<dbReference type="EMBL" id="CP001189">
    <property type="protein sequence ID" value="ACI50876.1"/>
    <property type="molecule type" value="Genomic_DNA"/>
</dbReference>
<dbReference type="RefSeq" id="WP_012223777.1">
    <property type="nucleotide sequence ID" value="NC_010125.1"/>
</dbReference>
<dbReference type="RefSeq" id="WP_012553581.1">
    <property type="nucleotide sequence ID" value="NC_011365.1"/>
</dbReference>
<dbReference type="SMR" id="A9HBY2"/>
<dbReference type="STRING" id="272568.GDI0929"/>
<dbReference type="KEGG" id="gdi:GDI0929"/>
<dbReference type="KEGG" id="gdj:Gdia_1093"/>
<dbReference type="eggNOG" id="COG0682">
    <property type="taxonomic scope" value="Bacteria"/>
</dbReference>
<dbReference type="HOGENOM" id="CLU_013386_1_0_5"/>
<dbReference type="OrthoDB" id="871140at2"/>
<dbReference type="UniPathway" id="UPA00664"/>
<dbReference type="Proteomes" id="UP000001176">
    <property type="component" value="Chromosome"/>
</dbReference>
<dbReference type="GO" id="GO:0005886">
    <property type="term" value="C:plasma membrane"/>
    <property type="evidence" value="ECO:0007669"/>
    <property type="project" value="UniProtKB-SubCell"/>
</dbReference>
<dbReference type="GO" id="GO:0008961">
    <property type="term" value="F:phosphatidylglycerol-prolipoprotein diacylglyceryl transferase activity"/>
    <property type="evidence" value="ECO:0007669"/>
    <property type="project" value="UniProtKB-UniRule"/>
</dbReference>
<dbReference type="GO" id="GO:0042158">
    <property type="term" value="P:lipoprotein biosynthetic process"/>
    <property type="evidence" value="ECO:0007669"/>
    <property type="project" value="UniProtKB-UniRule"/>
</dbReference>
<dbReference type="HAMAP" id="MF_01147">
    <property type="entry name" value="Lgt"/>
    <property type="match status" value="1"/>
</dbReference>
<dbReference type="InterPro" id="IPR001640">
    <property type="entry name" value="Lgt"/>
</dbReference>
<dbReference type="NCBIfam" id="TIGR00544">
    <property type="entry name" value="lgt"/>
    <property type="match status" value="1"/>
</dbReference>
<dbReference type="PANTHER" id="PTHR30589:SF0">
    <property type="entry name" value="PHOSPHATIDYLGLYCEROL--PROLIPOPROTEIN DIACYLGLYCERYL TRANSFERASE"/>
    <property type="match status" value="1"/>
</dbReference>
<dbReference type="PANTHER" id="PTHR30589">
    <property type="entry name" value="PROLIPOPROTEIN DIACYLGLYCERYL TRANSFERASE"/>
    <property type="match status" value="1"/>
</dbReference>
<dbReference type="Pfam" id="PF01790">
    <property type="entry name" value="LGT"/>
    <property type="match status" value="1"/>
</dbReference>
<dbReference type="PROSITE" id="PS01311">
    <property type="entry name" value="LGT"/>
    <property type="match status" value="1"/>
</dbReference>
<protein>
    <recommendedName>
        <fullName evidence="1">Phosphatidylglycerol--prolipoprotein diacylglyceryl transferase</fullName>
        <ecNumber evidence="1">2.5.1.145</ecNumber>
    </recommendedName>
</protein>
<proteinExistence type="inferred from homology"/>
<accession>A9HBY2</accession>
<accession>B5ZGG8</accession>